<feature type="chain" id="PRO_0000240115" description="NADH-quinone oxidoreductase subunit H">
    <location>
        <begin position="1"/>
        <end position="354"/>
    </location>
</feature>
<feature type="transmembrane region" description="Helical" evidence="1">
    <location>
        <begin position="16"/>
        <end position="36"/>
    </location>
</feature>
<feature type="transmembrane region" description="Helical" evidence="1">
    <location>
        <begin position="90"/>
        <end position="110"/>
    </location>
</feature>
<feature type="transmembrane region" description="Helical" evidence="1">
    <location>
        <begin position="126"/>
        <end position="146"/>
    </location>
</feature>
<feature type="transmembrane region" description="Helical" evidence="1">
    <location>
        <begin position="170"/>
        <end position="190"/>
    </location>
</feature>
<feature type="transmembrane region" description="Helical" evidence="1">
    <location>
        <begin position="197"/>
        <end position="217"/>
    </location>
</feature>
<feature type="transmembrane region" description="Helical" evidence="1">
    <location>
        <begin position="249"/>
        <end position="269"/>
    </location>
</feature>
<feature type="transmembrane region" description="Helical" evidence="1">
    <location>
        <begin position="290"/>
        <end position="310"/>
    </location>
</feature>
<feature type="transmembrane region" description="Helical" evidence="1">
    <location>
        <begin position="329"/>
        <end position="349"/>
    </location>
</feature>
<comment type="function">
    <text evidence="1">NDH-1 shuttles electrons from NADH, via FMN and iron-sulfur (Fe-S) centers, to quinones in the respiratory chain. The immediate electron acceptor for the enzyme in this species is believed to be ubiquinone. Couples the redox reaction to proton translocation (for every two electrons transferred, four hydrogen ions are translocated across the cytoplasmic membrane), and thus conserves the redox energy in a proton gradient. This subunit may bind ubiquinone.</text>
</comment>
<comment type="catalytic activity">
    <reaction evidence="1">
        <text>a quinone + NADH + 5 H(+)(in) = a quinol + NAD(+) + 4 H(+)(out)</text>
        <dbReference type="Rhea" id="RHEA:57888"/>
        <dbReference type="ChEBI" id="CHEBI:15378"/>
        <dbReference type="ChEBI" id="CHEBI:24646"/>
        <dbReference type="ChEBI" id="CHEBI:57540"/>
        <dbReference type="ChEBI" id="CHEBI:57945"/>
        <dbReference type="ChEBI" id="CHEBI:132124"/>
    </reaction>
</comment>
<comment type="subunit">
    <text evidence="1">NDH-1 is composed of 14 different subunits. Subunits NuoA, H, J, K, L, M, N constitute the membrane sector of the complex.</text>
</comment>
<comment type="subcellular location">
    <subcellularLocation>
        <location evidence="1">Cell inner membrane</location>
        <topology evidence="1">Multi-pass membrane protein</topology>
    </subcellularLocation>
</comment>
<comment type="similarity">
    <text evidence="1">Belongs to the complex I subunit 1 family.</text>
</comment>
<proteinExistence type="inferred from homology"/>
<reference key="1">
    <citation type="journal article" date="2006" name="PLoS Biol.">
        <title>The genome of deep-sea vent chemolithoautotroph Thiomicrospira crunogena XCL-2.</title>
        <authorList>
            <person name="Scott K.M."/>
            <person name="Sievert S.M."/>
            <person name="Abril F.N."/>
            <person name="Ball L.A."/>
            <person name="Barrett C.J."/>
            <person name="Blake R.A."/>
            <person name="Boller A.J."/>
            <person name="Chain P.S.G."/>
            <person name="Clark J.A."/>
            <person name="Davis C.R."/>
            <person name="Detter C."/>
            <person name="Do K.F."/>
            <person name="Dobrinski K.P."/>
            <person name="Faza B.I."/>
            <person name="Fitzpatrick K.A."/>
            <person name="Freyermuth S.K."/>
            <person name="Harmer T.L."/>
            <person name="Hauser L.J."/>
            <person name="Huegler M."/>
            <person name="Kerfeld C.A."/>
            <person name="Klotz M.G."/>
            <person name="Kong W.W."/>
            <person name="Land M."/>
            <person name="Lapidus A."/>
            <person name="Larimer F.W."/>
            <person name="Longo D.L."/>
            <person name="Lucas S."/>
            <person name="Malfatti S.A."/>
            <person name="Massey S.E."/>
            <person name="Martin D.D."/>
            <person name="McCuddin Z."/>
            <person name="Meyer F."/>
            <person name="Moore J.L."/>
            <person name="Ocampo L.H. Jr."/>
            <person name="Paul J.H."/>
            <person name="Paulsen I.T."/>
            <person name="Reep D.K."/>
            <person name="Ren Q."/>
            <person name="Ross R.L."/>
            <person name="Sato P.Y."/>
            <person name="Thomas P."/>
            <person name="Tinkham L.E."/>
            <person name="Zeruth G.T."/>
        </authorList>
    </citation>
    <scope>NUCLEOTIDE SEQUENCE [LARGE SCALE GENOMIC DNA]</scope>
    <source>
        <strain>DSM 25203 / XCL-2</strain>
    </source>
</reference>
<evidence type="ECO:0000255" key="1">
    <source>
        <dbReference type="HAMAP-Rule" id="MF_01350"/>
    </source>
</evidence>
<name>NUOH_HYDCU</name>
<dbReference type="EC" id="7.1.1.-" evidence="1"/>
<dbReference type="EMBL" id="CP000109">
    <property type="protein sequence ID" value="ABB41420.1"/>
    <property type="molecule type" value="Genomic_DNA"/>
</dbReference>
<dbReference type="SMR" id="Q31HF3"/>
<dbReference type="STRING" id="317025.Tcr_0824"/>
<dbReference type="KEGG" id="tcx:Tcr_0824"/>
<dbReference type="eggNOG" id="COG1005">
    <property type="taxonomic scope" value="Bacteria"/>
</dbReference>
<dbReference type="HOGENOM" id="CLU_015134_0_1_6"/>
<dbReference type="OrthoDB" id="9803734at2"/>
<dbReference type="GO" id="GO:0005886">
    <property type="term" value="C:plasma membrane"/>
    <property type="evidence" value="ECO:0007669"/>
    <property type="project" value="UniProtKB-SubCell"/>
</dbReference>
<dbReference type="GO" id="GO:0003954">
    <property type="term" value="F:NADH dehydrogenase activity"/>
    <property type="evidence" value="ECO:0007669"/>
    <property type="project" value="TreeGrafter"/>
</dbReference>
<dbReference type="GO" id="GO:0016655">
    <property type="term" value="F:oxidoreductase activity, acting on NAD(P)H, quinone or similar compound as acceptor"/>
    <property type="evidence" value="ECO:0007669"/>
    <property type="project" value="UniProtKB-UniRule"/>
</dbReference>
<dbReference type="GO" id="GO:0048038">
    <property type="term" value="F:quinone binding"/>
    <property type="evidence" value="ECO:0007669"/>
    <property type="project" value="UniProtKB-KW"/>
</dbReference>
<dbReference type="GO" id="GO:0009060">
    <property type="term" value="P:aerobic respiration"/>
    <property type="evidence" value="ECO:0007669"/>
    <property type="project" value="TreeGrafter"/>
</dbReference>
<dbReference type="HAMAP" id="MF_01350">
    <property type="entry name" value="NDH1_NuoH"/>
    <property type="match status" value="1"/>
</dbReference>
<dbReference type="InterPro" id="IPR001694">
    <property type="entry name" value="NADH_UbQ_OxRdtase_su1/FPO"/>
</dbReference>
<dbReference type="InterPro" id="IPR018086">
    <property type="entry name" value="NADH_UbQ_OxRdtase_su1_CS"/>
</dbReference>
<dbReference type="NCBIfam" id="NF004741">
    <property type="entry name" value="PRK06076.1-2"/>
    <property type="match status" value="1"/>
</dbReference>
<dbReference type="PANTHER" id="PTHR11432">
    <property type="entry name" value="NADH DEHYDROGENASE SUBUNIT 1"/>
    <property type="match status" value="1"/>
</dbReference>
<dbReference type="PANTHER" id="PTHR11432:SF3">
    <property type="entry name" value="NADH-UBIQUINONE OXIDOREDUCTASE CHAIN 1"/>
    <property type="match status" value="1"/>
</dbReference>
<dbReference type="Pfam" id="PF00146">
    <property type="entry name" value="NADHdh"/>
    <property type="match status" value="1"/>
</dbReference>
<dbReference type="PROSITE" id="PS00668">
    <property type="entry name" value="COMPLEX1_ND1_2"/>
    <property type="match status" value="1"/>
</dbReference>
<gene>
    <name evidence="1" type="primary">nuoH</name>
    <name type="ordered locus">Tcr_0824</name>
</gene>
<protein>
    <recommendedName>
        <fullName evidence="1">NADH-quinone oxidoreductase subunit H</fullName>
        <ecNumber evidence="1">7.1.1.-</ecNumber>
    </recommendedName>
    <alternativeName>
        <fullName evidence="1">NADH dehydrogenase I subunit H</fullName>
    </alternativeName>
    <alternativeName>
        <fullName evidence="1">NDH-1 subunit H</fullName>
    </alternativeName>
</protein>
<keyword id="KW-0997">Cell inner membrane</keyword>
<keyword id="KW-1003">Cell membrane</keyword>
<keyword id="KW-0472">Membrane</keyword>
<keyword id="KW-0520">NAD</keyword>
<keyword id="KW-0874">Quinone</keyword>
<keyword id="KW-1278">Translocase</keyword>
<keyword id="KW-0812">Transmembrane</keyword>
<keyword id="KW-1133">Transmembrane helix</keyword>
<keyword id="KW-0830">Ubiquinone</keyword>
<organism>
    <name type="scientific">Hydrogenovibrio crunogenus (strain DSM 25203 / XCL-2)</name>
    <name type="common">Thiomicrospira crunogena</name>
    <dbReference type="NCBI Taxonomy" id="317025"/>
    <lineage>
        <taxon>Bacteria</taxon>
        <taxon>Pseudomonadati</taxon>
        <taxon>Pseudomonadota</taxon>
        <taxon>Gammaproteobacteria</taxon>
        <taxon>Thiotrichales</taxon>
        <taxon>Piscirickettsiaceae</taxon>
        <taxon>Hydrogenovibrio</taxon>
    </lineage>
</organism>
<accession>Q31HF3</accession>
<sequence>MFDALQAWLSSFLFDWLAVLITLVLQAVAVILPVMITVAWLTYAERKVIGYMQVRMGPNRVGPGGWLQPIADAIKAMTKEVVIPAQSNKYLFIIAPILALAPAVAAWAVIPFDANGVVAADINAGVLYVLAVASIGVYGIVISGWASNSKYAFLGALRASAQKISYEIAMGFALVTVLMVADTMNLTGIVEGQQGGIWNWYWIPLLPMFFVYFISGLAETNRAPFDVAEGESEIVAGFHVEYSGMAFAVFFLAEYAMMILISFMTAIMFLGGWYSPFEGIAGLESVFSWVPGFVWLFAKVAFLLFLFLWFRATFPRYRYDQIMRLGWKVLIPVTIVWVFVVGVMEYFKVSPWFN</sequence>